<dbReference type="EC" id="4.1.1.65" evidence="1"/>
<dbReference type="EMBL" id="AP008229">
    <property type="protein sequence ID" value="BAE69847.1"/>
    <property type="molecule type" value="Genomic_DNA"/>
</dbReference>
<dbReference type="SMR" id="Q2P0T0"/>
<dbReference type="KEGG" id="xom:XOO3092"/>
<dbReference type="HOGENOM" id="CLU_029061_4_1_6"/>
<dbReference type="UniPathway" id="UPA00558">
    <property type="reaction ID" value="UER00616"/>
</dbReference>
<dbReference type="GO" id="GO:0005886">
    <property type="term" value="C:plasma membrane"/>
    <property type="evidence" value="ECO:0007669"/>
    <property type="project" value="UniProtKB-SubCell"/>
</dbReference>
<dbReference type="GO" id="GO:0004609">
    <property type="term" value="F:phosphatidylserine decarboxylase activity"/>
    <property type="evidence" value="ECO:0007669"/>
    <property type="project" value="UniProtKB-UniRule"/>
</dbReference>
<dbReference type="GO" id="GO:0006646">
    <property type="term" value="P:phosphatidylethanolamine biosynthetic process"/>
    <property type="evidence" value="ECO:0007669"/>
    <property type="project" value="UniProtKB-UniRule"/>
</dbReference>
<dbReference type="HAMAP" id="MF_00662">
    <property type="entry name" value="PS_decarb_PSD_B_type1"/>
    <property type="match status" value="1"/>
</dbReference>
<dbReference type="InterPro" id="IPR003817">
    <property type="entry name" value="PS_Dcarbxylase"/>
</dbReference>
<dbReference type="InterPro" id="IPR033177">
    <property type="entry name" value="PSD-B"/>
</dbReference>
<dbReference type="InterPro" id="IPR033178">
    <property type="entry name" value="PSD_type1_pro"/>
</dbReference>
<dbReference type="NCBIfam" id="TIGR00163">
    <property type="entry name" value="PS_decarb"/>
    <property type="match status" value="1"/>
</dbReference>
<dbReference type="PANTHER" id="PTHR10067">
    <property type="entry name" value="PHOSPHATIDYLSERINE DECARBOXYLASE"/>
    <property type="match status" value="1"/>
</dbReference>
<dbReference type="PANTHER" id="PTHR10067:SF6">
    <property type="entry name" value="PHOSPHATIDYLSERINE DECARBOXYLASE PROENZYME, MITOCHONDRIAL"/>
    <property type="match status" value="1"/>
</dbReference>
<dbReference type="Pfam" id="PF02666">
    <property type="entry name" value="PS_Dcarbxylase"/>
    <property type="match status" value="1"/>
</dbReference>
<gene>
    <name evidence="1" type="primary">psd</name>
    <name type="ordered locus">XOO3092</name>
</gene>
<proteinExistence type="inferred from homology"/>
<protein>
    <recommendedName>
        <fullName evidence="1">Phosphatidylserine decarboxylase proenzyme</fullName>
        <ecNumber evidence="1">4.1.1.65</ecNumber>
    </recommendedName>
    <component>
        <recommendedName>
            <fullName evidence="1">Phosphatidylserine decarboxylase alpha chain</fullName>
        </recommendedName>
    </component>
    <component>
        <recommendedName>
            <fullName evidence="1">Phosphatidylserine decarboxylase beta chain</fullName>
        </recommendedName>
    </component>
</protein>
<accession>Q2P0T0</accession>
<name>PSD_XANOM</name>
<sequence length="282" mass="30694">MSLVTSLTYVLPHRLLSSLARALAYSDRPATKQWLIDTVTRKFGVDLSEAQEPDPRAYPTFNAFFTRALKHGARVPDADPAALLMPADGRISQLGPIENGRIFQAKGQSFTAAELLGDAGAAAPFNNGLFATVYLSPKDYHRVHMPWTGTLRTTVHVPGRLFSVGPDAVRNVPRLFARNERLVCHFDTDFGPMASVMVGALLVSGVETVWSGVEIPRYGDRITRKDYRGKGIVLEKFAEMARFNYGSTVIVLLPPGVATLDGGLGAETSVRLGQALARRQLG</sequence>
<comment type="function">
    <text evidence="1">Catalyzes the formation of phosphatidylethanolamine (PtdEtn) from phosphatidylserine (PtdSer).</text>
</comment>
<comment type="catalytic activity">
    <reaction evidence="1">
        <text>a 1,2-diacyl-sn-glycero-3-phospho-L-serine + H(+) = a 1,2-diacyl-sn-glycero-3-phosphoethanolamine + CO2</text>
        <dbReference type="Rhea" id="RHEA:20828"/>
        <dbReference type="ChEBI" id="CHEBI:15378"/>
        <dbReference type="ChEBI" id="CHEBI:16526"/>
        <dbReference type="ChEBI" id="CHEBI:57262"/>
        <dbReference type="ChEBI" id="CHEBI:64612"/>
        <dbReference type="EC" id="4.1.1.65"/>
    </reaction>
</comment>
<comment type="cofactor">
    <cofactor evidence="1">
        <name>pyruvate</name>
        <dbReference type="ChEBI" id="CHEBI:15361"/>
    </cofactor>
    <text evidence="1">Binds 1 pyruvoyl group covalently per subunit.</text>
</comment>
<comment type="pathway">
    <text evidence="1">Phospholipid metabolism; phosphatidylethanolamine biosynthesis; phosphatidylethanolamine from CDP-diacylglycerol: step 2/2.</text>
</comment>
<comment type="subunit">
    <text evidence="1">Heterodimer of a large membrane-associated beta subunit and a small pyruvoyl-containing alpha subunit.</text>
</comment>
<comment type="subcellular location">
    <subcellularLocation>
        <location evidence="1">Cell membrane</location>
        <topology evidence="1">Peripheral membrane protein</topology>
    </subcellularLocation>
</comment>
<comment type="PTM">
    <text evidence="1">Is synthesized initially as an inactive proenzyme. Formation of the active enzyme involves a self-maturation process in which the active site pyruvoyl group is generated from an internal serine residue via an autocatalytic post-translational modification. Two non-identical subunits are generated from the proenzyme in this reaction, and the pyruvate is formed at the N-terminus of the alpha chain, which is derived from the carboxyl end of the proenzyme. The autoendoproteolytic cleavage occurs by a canonical serine protease mechanism, in which the side chain hydroxyl group of the serine supplies its oxygen atom to form the C-terminus of the beta chain, while the remainder of the serine residue undergoes an oxidative deamination to produce ammonia and the pyruvoyl prosthetic group on the alpha chain. During this reaction, the Ser that is part of the protease active site of the proenzyme becomes the pyruvoyl prosthetic group, which constitutes an essential element of the active site of the mature decarboxylase.</text>
</comment>
<comment type="similarity">
    <text evidence="1">Belongs to the phosphatidylserine decarboxylase family. PSD-B subfamily. Prokaryotic type I sub-subfamily.</text>
</comment>
<feature type="chain" id="PRO_0000262171" description="Phosphatidylserine decarboxylase beta chain" evidence="1">
    <location>
        <begin position="1"/>
        <end position="246"/>
    </location>
</feature>
<feature type="chain" id="PRO_0000262172" description="Phosphatidylserine decarboxylase alpha chain" evidence="1">
    <location>
        <begin position="247"/>
        <end position="282"/>
    </location>
</feature>
<feature type="active site" description="Charge relay system; for autoendoproteolytic cleavage activity" evidence="1">
    <location>
        <position position="88"/>
    </location>
</feature>
<feature type="active site" description="Charge relay system; for autoendoproteolytic cleavage activity" evidence="1">
    <location>
        <position position="144"/>
    </location>
</feature>
<feature type="active site" description="Charge relay system; for autoendoproteolytic cleavage activity" evidence="1">
    <location>
        <position position="247"/>
    </location>
</feature>
<feature type="active site" description="Schiff-base intermediate with substrate; via pyruvic acid; for decarboxylase activity" evidence="1">
    <location>
        <position position="247"/>
    </location>
</feature>
<feature type="site" description="Cleavage (non-hydrolytic); by autocatalysis" evidence="1">
    <location>
        <begin position="246"/>
        <end position="247"/>
    </location>
</feature>
<feature type="modified residue" description="Pyruvic acid (Ser); by autocatalysis" evidence="1">
    <location>
        <position position="247"/>
    </location>
</feature>
<reference key="1">
    <citation type="journal article" date="2005" name="Jpn. Agric. Res. Q.">
        <title>Genome sequence of Xanthomonas oryzae pv. oryzae suggests contribution of large numbers of effector genes and insertion sequences to its race diversity.</title>
        <authorList>
            <person name="Ochiai H."/>
            <person name="Inoue Y."/>
            <person name="Takeya M."/>
            <person name="Sasaki A."/>
            <person name="Kaku H."/>
        </authorList>
    </citation>
    <scope>NUCLEOTIDE SEQUENCE [LARGE SCALE GENOMIC DNA]</scope>
    <source>
        <strain>MAFF 311018</strain>
    </source>
</reference>
<evidence type="ECO:0000255" key="1">
    <source>
        <dbReference type="HAMAP-Rule" id="MF_00662"/>
    </source>
</evidence>
<keyword id="KW-1003">Cell membrane</keyword>
<keyword id="KW-0210">Decarboxylase</keyword>
<keyword id="KW-0444">Lipid biosynthesis</keyword>
<keyword id="KW-0443">Lipid metabolism</keyword>
<keyword id="KW-0456">Lyase</keyword>
<keyword id="KW-0472">Membrane</keyword>
<keyword id="KW-0594">Phospholipid biosynthesis</keyword>
<keyword id="KW-1208">Phospholipid metabolism</keyword>
<keyword id="KW-0670">Pyruvate</keyword>
<keyword id="KW-0865">Zymogen</keyword>
<organism>
    <name type="scientific">Xanthomonas oryzae pv. oryzae (strain MAFF 311018)</name>
    <dbReference type="NCBI Taxonomy" id="342109"/>
    <lineage>
        <taxon>Bacteria</taxon>
        <taxon>Pseudomonadati</taxon>
        <taxon>Pseudomonadota</taxon>
        <taxon>Gammaproteobacteria</taxon>
        <taxon>Lysobacterales</taxon>
        <taxon>Lysobacteraceae</taxon>
        <taxon>Xanthomonas</taxon>
    </lineage>
</organism>